<keyword id="KW-0217">Developmental protein</keyword>
<keyword id="KW-0238">DNA-binding</keyword>
<keyword id="KW-0539">Nucleus</keyword>
<keyword id="KW-1185">Reference proteome</keyword>
<keyword id="KW-0678">Repressor</keyword>
<keyword id="KW-0804">Transcription</keyword>
<keyword id="KW-0805">Transcription regulation</keyword>
<dbReference type="EMBL" id="AB512495">
    <property type="protein sequence ID" value="BAI52984.1"/>
    <property type="molecule type" value="mRNA"/>
</dbReference>
<dbReference type="EMBL" id="AP004081">
    <property type="protein sequence ID" value="BAD21590.1"/>
    <property type="molecule type" value="Genomic_DNA"/>
</dbReference>
<dbReference type="EMBL" id="AP005303">
    <property type="protein sequence ID" value="BAD22027.1"/>
    <property type="molecule type" value="Genomic_DNA"/>
</dbReference>
<dbReference type="EMBL" id="AP008208">
    <property type="protein sequence ID" value="BAF10387.1"/>
    <property type="molecule type" value="Genomic_DNA"/>
</dbReference>
<dbReference type="EMBL" id="AP014958">
    <property type="protein sequence ID" value="BAS81516.1"/>
    <property type="molecule type" value="Genomic_DNA"/>
</dbReference>
<dbReference type="EMBL" id="CM000139">
    <property type="protein sequence ID" value="EAZ25035.1"/>
    <property type="molecule type" value="Genomic_DNA"/>
</dbReference>
<dbReference type="EMBL" id="AK111446">
    <property type="protein sequence ID" value="BAG99260.1"/>
    <property type="molecule type" value="mRNA"/>
</dbReference>
<dbReference type="RefSeq" id="XP_015624971.1">
    <property type="nucleotide sequence ID" value="XM_015769485.1"/>
</dbReference>
<dbReference type="SMR" id="Q6K5X1"/>
<dbReference type="FunCoup" id="Q6K5X1">
    <property type="interactions" value="350"/>
</dbReference>
<dbReference type="PaxDb" id="39947-Q6K5X1"/>
<dbReference type="EnsemblPlants" id="Os02t0811000-01">
    <property type="protein sequence ID" value="Os02t0811000-01"/>
    <property type="gene ID" value="Os02g0811000"/>
</dbReference>
<dbReference type="Gramene" id="Os02t0811000-01">
    <property type="protein sequence ID" value="Os02t0811000-01"/>
    <property type="gene ID" value="Os02g0811000"/>
</dbReference>
<dbReference type="KEGG" id="dosa:Os02g0811000"/>
<dbReference type="eggNOG" id="ENOG502QT0B">
    <property type="taxonomic scope" value="Eukaryota"/>
</dbReference>
<dbReference type="HOGENOM" id="CLU_071168_3_0_1"/>
<dbReference type="InParanoid" id="Q6K5X1"/>
<dbReference type="OMA" id="ASPQFIM"/>
<dbReference type="OrthoDB" id="1906822at2759"/>
<dbReference type="Proteomes" id="UP000000763">
    <property type="component" value="Chromosome 2"/>
</dbReference>
<dbReference type="Proteomes" id="UP000007752">
    <property type="component" value="Chromosome 2"/>
</dbReference>
<dbReference type="Proteomes" id="UP000059680">
    <property type="component" value="Chromosome 2"/>
</dbReference>
<dbReference type="GO" id="GO:0005634">
    <property type="term" value="C:nucleus"/>
    <property type="evidence" value="ECO:0000314"/>
    <property type="project" value="UniProtKB"/>
</dbReference>
<dbReference type="GO" id="GO:0003677">
    <property type="term" value="F:DNA binding"/>
    <property type="evidence" value="ECO:0007669"/>
    <property type="project" value="UniProtKB-KW"/>
</dbReference>
<dbReference type="GO" id="GO:0042803">
    <property type="term" value="F:protein homodimerization activity"/>
    <property type="evidence" value="ECO:0000314"/>
    <property type="project" value="UniProtKB"/>
</dbReference>
<dbReference type="GO" id="GO:0009299">
    <property type="term" value="P:mRNA transcription"/>
    <property type="evidence" value="ECO:0000250"/>
    <property type="project" value="UniProtKB"/>
</dbReference>
<dbReference type="GO" id="GO:0045892">
    <property type="term" value="P:negative regulation of DNA-templated transcription"/>
    <property type="evidence" value="ECO:0000315"/>
    <property type="project" value="UniProtKB"/>
</dbReference>
<dbReference type="GO" id="GO:0090698">
    <property type="term" value="P:post-embryonic plant morphogenesis"/>
    <property type="evidence" value="ECO:0000250"/>
    <property type="project" value="UniProtKB"/>
</dbReference>
<dbReference type="GO" id="GO:0080050">
    <property type="term" value="P:regulation of seed development"/>
    <property type="evidence" value="ECO:0000315"/>
    <property type="project" value="UniProtKB"/>
</dbReference>
<dbReference type="GO" id="GO:0009416">
    <property type="term" value="P:response to light stimulus"/>
    <property type="evidence" value="ECO:0000318"/>
    <property type="project" value="GO_Central"/>
</dbReference>
<dbReference type="InterPro" id="IPR040222">
    <property type="entry name" value="ALOG"/>
</dbReference>
<dbReference type="InterPro" id="IPR006936">
    <property type="entry name" value="ALOG_dom"/>
</dbReference>
<dbReference type="PANTHER" id="PTHR31165">
    <property type="entry name" value="PROTEIN G1-LIKE2"/>
    <property type="match status" value="1"/>
</dbReference>
<dbReference type="PANTHER" id="PTHR31165:SF95">
    <property type="entry name" value="PROTEIN LIGHT-DEPENDENT SHORT HYPOCOTYLS 3"/>
    <property type="match status" value="1"/>
</dbReference>
<dbReference type="Pfam" id="PF04852">
    <property type="entry name" value="ALOG_dom"/>
    <property type="match status" value="1"/>
</dbReference>
<dbReference type="PROSITE" id="PS51697">
    <property type="entry name" value="ALOG"/>
    <property type="match status" value="1"/>
</dbReference>
<proteinExistence type="evidence at protein level"/>
<gene>
    <name evidence="11" type="primary">G1L6</name>
    <name evidence="14" type="synonym">AFD1</name>
    <name evidence="15" type="synonym">BLS1</name>
    <name evidence="13" type="synonym">BSG1</name>
    <name evidence="12" type="synonym">TH1</name>
    <name evidence="19" type="ordered locus">Os02g0811000</name>
    <name evidence="16" type="ordered locus">LOC_Os02g56610</name>
    <name evidence="17" type="ORF">OJ1116_E04.14</name>
    <name evidence="20" type="ORF">OsJ_08822</name>
    <name evidence="18" type="ORF">P0016F11.6</name>
</gene>
<name>G1L6_ORYSJ</name>
<accession>Q6K5X1</accession>
<accession>A0A0P0VR07</accession>
<comment type="function">
    <text evidence="4 5 6 7 8 9 10">Transcription factor required for lateral development of the lemma and palea (PubMed:22203474, PubMed:23526395, PubMed:25224972, PubMed:26486996, PubMed:29057928, PubMed:30725309, Ref.9). Involved in the regulation of grain hull development (PubMed:23526395). Possesses transactivation activity in yeast, and may determine grain shape and size by modifying gene expression in the grain hull (PubMed:23526395). Regulates the expression of cell proliferation and expansion related genes (PubMed:26486996). Acts as a transcriptional repressor and regulates cell expansion during the lateral development of spikelet (PubMed:29057928). May act upstream of hormone-related genes and starch and sucrose metabolism-related genes, which may be responsible for lemma and palea development, and grain filling, respectively (PubMed:30725309). Does not seem to function at stages of floral-organ initiation and patterning (Ref.9).</text>
</comment>
<comment type="subunit">
    <text evidence="8">Homodimer.</text>
</comment>
<comment type="subcellular location">
    <subcellularLocation>
        <location evidence="4 5 7 8 10">Nucleus</location>
    </subcellularLocation>
</comment>
<comment type="tissue specificity">
    <text evidence="4 5 7 10">Expressed in lemma, palea, rachis branches, flag leaves and young embryos (PubMed:22203474). Highly expressed in lemmas and paleas of young spikelets (PubMed:23526395, PubMed:26486996, Ref.9). Expressed in stamens, pistil and leaf sheaths (Ref.9).</text>
</comment>
<comment type="disruption phenotype">
    <text evidence="4 5 6 7 8 9 10">Triangular hull with tortuous lemma and palea (PubMed:22203474, PubMed:29057928). Defects in development of lemma and palea, which have a beak-like form (PubMed:25224972, PubMed:30725309, Ref.9). Beak-shaped grains of decreased width, thickness and weight with a loosely interlocked lemma and palea that are unable to close tightly (PubMed:23526395, PubMed:26486996, PubMed:29057928). Poor grain filling (PubMed:22203474, PubMed:23526395, PubMed:25224972, PubMed:26486996, PubMed:29057928, PubMed:30725309, Ref.9).</text>
</comment>
<comment type="similarity">
    <text evidence="16">Belongs to the plant homeotic and developmental regulators ALOG protein family.</text>
</comment>
<evidence type="ECO:0000255" key="1"/>
<evidence type="ECO:0000255" key="2">
    <source>
        <dbReference type="PROSITE-ProRule" id="PRU01033"/>
    </source>
</evidence>
<evidence type="ECO:0000256" key="3">
    <source>
        <dbReference type="SAM" id="MobiDB-lite"/>
    </source>
</evidence>
<evidence type="ECO:0000269" key="4">
    <source>
    </source>
</evidence>
<evidence type="ECO:0000269" key="5">
    <source>
    </source>
</evidence>
<evidence type="ECO:0000269" key="6">
    <source>
    </source>
</evidence>
<evidence type="ECO:0000269" key="7">
    <source>
    </source>
</evidence>
<evidence type="ECO:0000269" key="8">
    <source>
    </source>
</evidence>
<evidence type="ECO:0000269" key="9">
    <source>
    </source>
</evidence>
<evidence type="ECO:0000269" key="10">
    <source ref="9"/>
</evidence>
<evidence type="ECO:0000303" key="11">
    <source>
    </source>
</evidence>
<evidence type="ECO:0000303" key="12">
    <source>
    </source>
</evidence>
<evidence type="ECO:0000303" key="13">
    <source>
    </source>
</evidence>
<evidence type="ECO:0000303" key="14">
    <source>
    </source>
</evidence>
<evidence type="ECO:0000303" key="15">
    <source ref="9"/>
</evidence>
<evidence type="ECO:0000305" key="16"/>
<evidence type="ECO:0000312" key="17">
    <source>
        <dbReference type="EMBL" id="BAD21590.1"/>
    </source>
</evidence>
<evidence type="ECO:0000312" key="18">
    <source>
        <dbReference type="EMBL" id="BAD22027.1"/>
    </source>
</evidence>
<evidence type="ECO:0000312" key="19">
    <source>
        <dbReference type="EMBL" id="BAS81516.1"/>
    </source>
</evidence>
<evidence type="ECO:0000312" key="20">
    <source>
        <dbReference type="EMBL" id="EAZ25035.1"/>
    </source>
</evidence>
<reference key="1">
    <citation type="journal article" date="2009" name="Proc. Natl. Acad. Sci. U.S.A.">
        <title>The homeotic gene long sterile lemma (G1) specifies sterile lemma identity in the rice spikelet.</title>
        <authorList>
            <person name="Yoshida A."/>
            <person name="Suzaki Y."/>
            <person name="Tanaka W."/>
            <person name="Hirano H.-Y."/>
        </authorList>
    </citation>
    <scope>NUCLEOTIDE SEQUENCE [MRNA]</scope>
    <scope>GENE FAMILY</scope>
    <scope>NOMENCLATURE</scope>
    <source>
        <strain>cv. Nipponbare</strain>
    </source>
</reference>
<reference key="2">
    <citation type="journal article" date="2005" name="Nature">
        <title>The map-based sequence of the rice genome.</title>
        <authorList>
            <consortium name="International rice genome sequencing project (IRGSP)"/>
        </authorList>
    </citation>
    <scope>NUCLEOTIDE SEQUENCE [LARGE SCALE GENOMIC DNA]</scope>
    <source>
        <strain>cv. Nipponbare</strain>
    </source>
</reference>
<reference key="3">
    <citation type="journal article" date="2008" name="Nucleic Acids Res.">
        <title>The rice annotation project database (RAP-DB): 2008 update.</title>
        <authorList>
            <consortium name="The rice annotation project (RAP)"/>
        </authorList>
    </citation>
    <scope>GENOME REANNOTATION</scope>
    <source>
        <strain>cv. Nipponbare</strain>
    </source>
</reference>
<reference key="4">
    <citation type="journal article" date="2013" name="Rice">
        <title>Improvement of the Oryza sativa Nipponbare reference genome using next generation sequence and optical map data.</title>
        <authorList>
            <person name="Kawahara Y."/>
            <person name="de la Bastide M."/>
            <person name="Hamilton J.P."/>
            <person name="Kanamori H."/>
            <person name="McCombie W.R."/>
            <person name="Ouyang S."/>
            <person name="Schwartz D.C."/>
            <person name="Tanaka T."/>
            <person name="Wu J."/>
            <person name="Zhou S."/>
            <person name="Childs K.L."/>
            <person name="Davidson R.M."/>
            <person name="Lin H."/>
            <person name="Quesada-Ocampo L."/>
            <person name="Vaillancourt B."/>
            <person name="Sakai H."/>
            <person name="Lee S.S."/>
            <person name="Kim J."/>
            <person name="Numa H."/>
            <person name="Itoh T."/>
            <person name="Buell C.R."/>
            <person name="Matsumoto T."/>
        </authorList>
    </citation>
    <scope>GENOME REANNOTATION</scope>
    <source>
        <strain>cv. Nipponbare</strain>
    </source>
</reference>
<reference key="5">
    <citation type="journal article" date="2005" name="PLoS Biol.">
        <title>The genomes of Oryza sativa: a history of duplications.</title>
        <authorList>
            <person name="Yu J."/>
            <person name="Wang J."/>
            <person name="Lin W."/>
            <person name="Li S."/>
            <person name="Li H."/>
            <person name="Zhou J."/>
            <person name="Ni P."/>
            <person name="Dong W."/>
            <person name="Hu S."/>
            <person name="Zeng C."/>
            <person name="Zhang J."/>
            <person name="Zhang Y."/>
            <person name="Li R."/>
            <person name="Xu Z."/>
            <person name="Li S."/>
            <person name="Li X."/>
            <person name="Zheng H."/>
            <person name="Cong L."/>
            <person name="Lin L."/>
            <person name="Yin J."/>
            <person name="Geng J."/>
            <person name="Li G."/>
            <person name="Shi J."/>
            <person name="Liu J."/>
            <person name="Lv H."/>
            <person name="Li J."/>
            <person name="Wang J."/>
            <person name="Deng Y."/>
            <person name="Ran L."/>
            <person name="Shi X."/>
            <person name="Wang X."/>
            <person name="Wu Q."/>
            <person name="Li C."/>
            <person name="Ren X."/>
            <person name="Wang J."/>
            <person name="Wang X."/>
            <person name="Li D."/>
            <person name="Liu D."/>
            <person name="Zhang X."/>
            <person name="Ji Z."/>
            <person name="Zhao W."/>
            <person name="Sun Y."/>
            <person name="Zhang Z."/>
            <person name="Bao J."/>
            <person name="Han Y."/>
            <person name="Dong L."/>
            <person name="Ji J."/>
            <person name="Chen P."/>
            <person name="Wu S."/>
            <person name="Liu J."/>
            <person name="Xiao Y."/>
            <person name="Bu D."/>
            <person name="Tan J."/>
            <person name="Yang L."/>
            <person name="Ye C."/>
            <person name="Zhang J."/>
            <person name="Xu J."/>
            <person name="Zhou Y."/>
            <person name="Yu Y."/>
            <person name="Zhang B."/>
            <person name="Zhuang S."/>
            <person name="Wei H."/>
            <person name="Liu B."/>
            <person name="Lei M."/>
            <person name="Yu H."/>
            <person name="Li Y."/>
            <person name="Xu H."/>
            <person name="Wei S."/>
            <person name="He X."/>
            <person name="Fang L."/>
            <person name="Zhang Z."/>
            <person name="Zhang Y."/>
            <person name="Huang X."/>
            <person name="Su Z."/>
            <person name="Tong W."/>
            <person name="Li J."/>
            <person name="Tong Z."/>
            <person name="Li S."/>
            <person name="Ye J."/>
            <person name="Wang L."/>
            <person name="Fang L."/>
            <person name="Lei T."/>
            <person name="Chen C.-S."/>
            <person name="Chen H.-C."/>
            <person name="Xu Z."/>
            <person name="Li H."/>
            <person name="Huang H."/>
            <person name="Zhang F."/>
            <person name="Xu H."/>
            <person name="Li N."/>
            <person name="Zhao C."/>
            <person name="Li S."/>
            <person name="Dong L."/>
            <person name="Huang Y."/>
            <person name="Li L."/>
            <person name="Xi Y."/>
            <person name="Qi Q."/>
            <person name="Li W."/>
            <person name="Zhang B."/>
            <person name="Hu W."/>
            <person name="Zhang Y."/>
            <person name="Tian X."/>
            <person name="Jiao Y."/>
            <person name="Liang X."/>
            <person name="Jin J."/>
            <person name="Gao L."/>
            <person name="Zheng W."/>
            <person name="Hao B."/>
            <person name="Liu S.-M."/>
            <person name="Wang W."/>
            <person name="Yuan L."/>
            <person name="Cao M."/>
            <person name="McDermott J."/>
            <person name="Samudrala R."/>
            <person name="Wang J."/>
            <person name="Wong G.K.-S."/>
            <person name="Yang H."/>
        </authorList>
    </citation>
    <scope>NUCLEOTIDE SEQUENCE [LARGE SCALE GENOMIC DNA]</scope>
    <source>
        <strain>cv. Nipponbare</strain>
    </source>
</reference>
<reference key="6">
    <citation type="journal article" date="2003" name="Science">
        <title>Collection, mapping, and annotation of over 28,000 cDNA clones from japonica rice.</title>
        <authorList>
            <consortium name="The rice full-length cDNA consortium"/>
        </authorList>
    </citation>
    <scope>NUCLEOTIDE SEQUENCE [LARGE SCALE MRNA]</scope>
    <source>
        <strain>cv. Nipponbare</strain>
    </source>
</reference>
<reference key="7">
    <citation type="journal article" date="2012" name="Biol. Direct">
        <title>ALOG domains: provenance of plant homeotic and developmental regulators from the DNA-binding domain of a novel class of DIRS1-type retroposons.</title>
        <authorList>
            <person name="Iyer L.M."/>
            <person name="Aravind L."/>
        </authorList>
    </citation>
    <scope>DNA-BINDING</scope>
    <scope>GENE FAMILY</scope>
</reference>
<reference key="8">
    <citation type="journal article" date="2012" name="Plant Mol. Biol.">
        <title>TH1, a DUF640 domain-like gene controls lemma and palea development in rice.</title>
        <authorList>
            <person name="Li X."/>
            <person name="Sun L."/>
            <person name="Tan L."/>
            <person name="Liu F."/>
            <person name="Zhu Z."/>
            <person name="Fu Y."/>
            <person name="Sun X."/>
            <person name="Sun X."/>
            <person name="Xie D."/>
            <person name="Sun C."/>
        </authorList>
    </citation>
    <scope>FUNCTION</scope>
    <scope>SUBCELLULAR LOCATION</scope>
    <scope>TISSUE SPECIFICITY</scope>
    <scope>DISRUPTION PHENOTYPE</scope>
</reference>
<reference key="9">
    <citation type="journal article" date="2013" name="Plant Mol. Biol. Rep.">
        <title>BEAK LIKE SPIKELET1 is required for lateral development of lemma and palea in rice.</title>
        <authorList>
            <person name="Ma X."/>
            <person name="Cheng Z."/>
            <person name="Wu F."/>
            <person name="Jin M."/>
            <person name="Zhang L."/>
            <person name="Zhou F."/>
            <person name="Wang J."/>
            <person name="Zhou K."/>
            <person name="Ma J."/>
            <person name="Lin Q."/>
            <person name="Lei C."/>
            <person name="Wan J."/>
        </authorList>
    </citation>
    <scope>FUNCTION</scope>
    <scope>SUBCELLULAR LOCATION</scope>
    <scope>TISSUE SPECIFICITY</scope>
    <scope>DISRUPTION PHENOTYPE</scope>
</reference>
<reference key="10">
    <citation type="journal article" date="2013" name="Sci. China Life Sci.">
        <title>Beak-shaped grain 1/TRIANGULAR HULL 1, a DUF640 gene, is associated with grain shape, size and weight in rice.</title>
        <authorList>
            <person name="Yan D."/>
            <person name="Zhou Y."/>
            <person name="Ye S."/>
            <person name="Zeng L."/>
            <person name="Zhang X."/>
            <person name="He Z."/>
        </authorList>
    </citation>
    <scope>FUNCTION</scope>
    <scope>SUBCELLULAR LOCATION</scope>
    <scope>TISSUE SPECIFICITY</scope>
    <scope>DISRUPTION PHENOTYPE</scope>
</reference>
<reference key="11">
    <citation type="journal article" date="2014" name="Genes Genet. Syst.">
        <title>A role for TRIANGULAR HULL1 in fine-tuning spikelet morphogenesis in rice.</title>
        <authorList>
            <person name="Sato D.S."/>
            <person name="Ohmori Y."/>
            <person name="Nagashima H."/>
            <person name="Toriba T."/>
            <person name="Hirano H.Y."/>
        </authorList>
    </citation>
    <scope>FUNCTION</scope>
    <scope>DISRUPTION PHENOTYPE</scope>
</reference>
<reference key="12">
    <citation type="journal article" date="2016" name="J. Integr. Plant Biol.">
        <title>The pleiotropic ABNORMAL FLOWER AND DWARF1 affects plant height, floral development and grain yield in rice.</title>
        <authorList>
            <person name="Ren D."/>
            <person name="Rao Y."/>
            <person name="Wu L."/>
            <person name="Xu Q."/>
            <person name="Li Z."/>
            <person name="Yu H."/>
            <person name="Zhang Y."/>
            <person name="Leng Y."/>
            <person name="Hu J."/>
            <person name="Zhu L."/>
            <person name="Gao Z."/>
            <person name="Dong G."/>
            <person name="Zhang G."/>
            <person name="Guo L."/>
            <person name="Zeng D."/>
            <person name="Qian Q."/>
        </authorList>
    </citation>
    <scope>FUNCTION</scope>
    <scope>SUBCELLULAR LOCATION</scope>
    <scope>TISSUE SPECIFICITY</scope>
    <scope>DISRUPTION PHENOTYPE</scope>
</reference>
<reference key="13">
    <citation type="journal article" date="2017" name="Sci. Rep.">
        <title>The rice TRIANGULAR HULL1 protein acts as a transcriptional repressor in regulating lateral development of spikelet.</title>
        <authorList>
            <person name="Peng P."/>
            <person name="Liu L."/>
            <person name="Fang J."/>
            <person name="Zhao J."/>
            <person name="Yuan S."/>
            <person name="Li X."/>
        </authorList>
    </citation>
    <scope>FUNCTION</scope>
    <scope>SUBUNIT</scope>
    <scope>SUBCELLULAR LOCATION</scope>
    <scope>DISRUPTION PHENOTYPE</scope>
    <scope>MUTAGENESIS OF ARG-80; GLY-124 AND HIS-129</scope>
</reference>
<reference key="14">
    <citation type="journal article" date="2019" name="Rice">
        <title>Analysing the rice young panicle transcriptome reveals the gene regulatory network controlled by TRIANGULAR HULL1.</title>
        <authorList>
            <person name="Wang J."/>
            <person name="Zhang Q."/>
            <person name="Wang Y."/>
            <person name="Huang J."/>
            <person name="Luo N."/>
            <person name="Wei S."/>
            <person name="Jin J."/>
        </authorList>
    </citation>
    <scope>FUNCTION</scope>
    <scope>DISRUPTION PHENOTYPE</scope>
</reference>
<protein>
    <recommendedName>
        <fullName evidence="11">Protein G1-like6</fullName>
        <shortName evidence="11">OsG1L6</shortName>
    </recommendedName>
    <alternativeName>
        <fullName evidence="14">Protein ABNORMAL FLOWER AND DWARF 1</fullName>
    </alternativeName>
    <alternativeName>
        <fullName evidence="15">Protein BEAK LIKE SPIKELET 1</fullName>
    </alternativeName>
    <alternativeName>
        <fullName evidence="13">Protein BEAK-SHAPED GRAIN 1</fullName>
    </alternativeName>
    <alternativeName>
        <fullName evidence="12">Protein TRIANGULAR HULL 1</fullName>
    </alternativeName>
</protein>
<feature type="chain" id="PRO_0000425308" description="Protein G1-like6">
    <location>
        <begin position="1"/>
        <end position="248"/>
    </location>
</feature>
<feature type="domain" description="ALOG" evidence="2">
    <location>
        <begin position="80"/>
        <end position="207"/>
    </location>
</feature>
<feature type="region of interest" description="Disordered" evidence="3">
    <location>
        <begin position="1"/>
        <end position="35"/>
    </location>
</feature>
<feature type="region of interest" description="Disordered" evidence="3">
    <location>
        <begin position="50"/>
        <end position="84"/>
    </location>
</feature>
<feature type="region of interest" description="Disordered" evidence="3">
    <location>
        <begin position="198"/>
        <end position="248"/>
    </location>
</feature>
<feature type="short sequence motif" description="Nuclear localization signal" evidence="1">
    <location>
        <begin position="205"/>
        <end position="210"/>
    </location>
</feature>
<feature type="compositionally biased region" description="Basic residues" evidence="3">
    <location>
        <begin position="1"/>
        <end position="15"/>
    </location>
</feature>
<feature type="compositionally biased region" description="Gly residues" evidence="3">
    <location>
        <begin position="17"/>
        <end position="32"/>
    </location>
</feature>
<feature type="compositionally biased region" description="Low complexity" evidence="3">
    <location>
        <begin position="50"/>
        <end position="59"/>
    </location>
</feature>
<feature type="compositionally biased region" description="Gly residues" evidence="3">
    <location>
        <begin position="60"/>
        <end position="69"/>
    </location>
</feature>
<feature type="compositionally biased region" description="Low complexity" evidence="3">
    <location>
        <begin position="70"/>
        <end position="79"/>
    </location>
</feature>
<feature type="compositionally biased region" description="Low complexity" evidence="3">
    <location>
        <begin position="212"/>
        <end position="224"/>
    </location>
</feature>
<feature type="compositionally biased region" description="Low complexity" evidence="3">
    <location>
        <begin position="239"/>
        <end position="248"/>
    </location>
</feature>
<feature type="mutagenesis site" description="Loss of homodimerization." evidence="8">
    <original>R</original>
    <variation>W</variation>
    <location>
        <position position="80"/>
    </location>
</feature>
<feature type="mutagenesis site" description="Loss of homodimerization." evidence="8">
    <original>G</original>
    <variation>Q</variation>
    <location>
        <position position="124"/>
    </location>
</feature>
<feature type="mutagenesis site" description="Triangular hull 1 phenotype; loss of homodimerization." evidence="8">
    <original>H</original>
    <variation>Y</variation>
    <location>
        <position position="129"/>
    </location>
</feature>
<organism>
    <name type="scientific">Oryza sativa subsp. japonica</name>
    <name type="common">Rice</name>
    <dbReference type="NCBI Taxonomy" id="39947"/>
    <lineage>
        <taxon>Eukaryota</taxon>
        <taxon>Viridiplantae</taxon>
        <taxon>Streptophyta</taxon>
        <taxon>Embryophyta</taxon>
        <taxon>Tracheophyta</taxon>
        <taxon>Spermatophyta</taxon>
        <taxon>Magnoliopsida</taxon>
        <taxon>Liliopsida</taxon>
        <taxon>Poales</taxon>
        <taxon>Poaceae</taxon>
        <taxon>BOP clade</taxon>
        <taxon>Oryzoideae</taxon>
        <taxon>Oryzeae</taxon>
        <taxon>Oryzinae</taxon>
        <taxon>Oryza</taxon>
        <taxon>Oryza sativa</taxon>
    </lineage>
</organism>
<sequence>MDRHHHHHHHHHHHMMSGGGQDPAAGDGGAGGATQDSFFLGPAAAAMFSGAGSSSSGAGTSAGGGGGGPSPSSSSPSLSRYESQKRRDWNTFGQYLRNHRPPLSLSRCSGAHVLEFLKYMDQFGKTKVHTPVCPFYGHPNPPAPCPCPLRQAWGSLDALIGRLRAAYEENGGTPEMNPFGARAVRLYLREVRETQARARGISYEKKKRKKPSSAGAGAGPSSEGSPPPPGGSASGGGDTSASPQFIIP</sequence>